<keyword id="KW-0285">Flavoprotein</keyword>
<keyword id="KW-0288">FMN</keyword>
<keyword id="KW-0520">NAD</keyword>
<keyword id="KW-0521">NADP</keyword>
<keyword id="KW-0560">Oxidoreductase</keyword>
<feature type="chain" id="PRO_0000072727" description="Putative NADH dehydrogenase/NAD(P)H nitroreductase HadB">
    <location>
        <begin position="1"/>
        <end position="196"/>
    </location>
</feature>
<gene>
    <name type="primary">hadB</name>
</gene>
<sequence>MTATISLATLFGEARSQNGWLDRDVPDARLREIYDQMKFGPTSVNCSPARIVFVRSMEAKQKLAGAVAPANVDKVMNAPVVAIVGYDTRFYDRLPELFPHNPAVKSWFEGPEKAAFAETTAFRNGTLQGAYLIMAARAVGLDCGPMSGFNNAAVDAAFFAGTTIRSNFICGLGHGDPGRVFPRSPRLAFEQACTLA</sequence>
<name>HADB_RALPI</name>
<protein>
    <recommendedName>
        <fullName evidence="1">Putative NADH dehydrogenase/NAD(P)H nitroreductase HadB</fullName>
        <ecNumber evidence="1">1.-.-.-</ecNumber>
    </recommendedName>
</protein>
<accession>Q53009</accession>
<evidence type="ECO:0000255" key="1">
    <source>
        <dbReference type="HAMAP-Rule" id="MF_01204"/>
    </source>
</evidence>
<reference key="1">
    <citation type="journal article" date="1995" name="J. Ferment. Bioeng.">
        <title>A locus of Pseudomonas pickettii DTP0602, had, that encodes 2,4,6-trichlorophenol-4-dechlorinase with hydroxylase activity, and hydroxylation of various chlorophenols by the enzyme.</title>
        <authorList>
            <person name="Takizawa N."/>
            <person name="Yokoyama H."/>
            <person name="Yanagihara K."/>
            <person name="Hatta T."/>
            <person name="Kiyohara H."/>
        </authorList>
    </citation>
    <scope>NUCLEOTIDE SEQUENCE [GENOMIC DNA]</scope>
    <source>
        <strain>DTP0602</strain>
    </source>
</reference>
<organism>
    <name type="scientific">Ralstonia pickettii</name>
    <name type="common">Burkholderia pickettii</name>
    <dbReference type="NCBI Taxonomy" id="329"/>
    <lineage>
        <taxon>Bacteria</taxon>
        <taxon>Pseudomonadati</taxon>
        <taxon>Pseudomonadota</taxon>
        <taxon>Betaproteobacteria</taxon>
        <taxon>Burkholderiales</taxon>
        <taxon>Burkholderiaceae</taxon>
        <taxon>Ralstonia</taxon>
    </lineage>
</organism>
<comment type="cofactor">
    <cofactor evidence="1">
        <name>FMN</name>
        <dbReference type="ChEBI" id="CHEBI:58210"/>
    </cofactor>
</comment>
<comment type="similarity">
    <text evidence="1">Belongs to the nitroreductase family. HadB/RutE subfamily.</text>
</comment>
<dbReference type="EC" id="1.-.-.-" evidence="1"/>
<dbReference type="EMBL" id="D86544">
    <property type="protein sequence ID" value="BAA13106.1"/>
    <property type="molecule type" value="Genomic_DNA"/>
</dbReference>
<dbReference type="SMR" id="Q53009"/>
<dbReference type="STRING" id="1366050.N234_22420"/>
<dbReference type="GO" id="GO:0016491">
    <property type="term" value="F:oxidoreductase activity"/>
    <property type="evidence" value="ECO:0007669"/>
    <property type="project" value="UniProtKB-UniRule"/>
</dbReference>
<dbReference type="CDD" id="cd02148">
    <property type="entry name" value="RutE-like"/>
    <property type="match status" value="1"/>
</dbReference>
<dbReference type="Gene3D" id="3.40.109.10">
    <property type="entry name" value="NADH Oxidase"/>
    <property type="match status" value="1"/>
</dbReference>
<dbReference type="HAMAP" id="MF_01204">
    <property type="entry name" value="Oxidoreductase_RutE_HadB"/>
    <property type="match status" value="1"/>
</dbReference>
<dbReference type="InterPro" id="IPR029479">
    <property type="entry name" value="Nitroreductase"/>
</dbReference>
<dbReference type="InterPro" id="IPR000415">
    <property type="entry name" value="Nitroreductase-like"/>
</dbReference>
<dbReference type="InterPro" id="IPR050461">
    <property type="entry name" value="Nitroreductase_HadB/RutE"/>
</dbReference>
<dbReference type="InterPro" id="IPR023936">
    <property type="entry name" value="RutE-like"/>
</dbReference>
<dbReference type="NCBIfam" id="NF003768">
    <property type="entry name" value="PRK05365.1"/>
    <property type="match status" value="1"/>
</dbReference>
<dbReference type="PANTHER" id="PTHR43543">
    <property type="entry name" value="MALONIC SEMIALDEHYDE REDUCTASE RUTE-RELATED"/>
    <property type="match status" value="1"/>
</dbReference>
<dbReference type="PANTHER" id="PTHR43543:SF1">
    <property type="entry name" value="MALONIC SEMIALDEHYDE REDUCTASE RUTE-RELATED"/>
    <property type="match status" value="1"/>
</dbReference>
<dbReference type="Pfam" id="PF00881">
    <property type="entry name" value="Nitroreductase"/>
    <property type="match status" value="1"/>
</dbReference>
<dbReference type="SUPFAM" id="SSF55469">
    <property type="entry name" value="FMN-dependent nitroreductase-like"/>
    <property type="match status" value="1"/>
</dbReference>
<proteinExistence type="inferred from homology"/>